<accession>Q2JTZ2</accession>
<proteinExistence type="inferred from homology"/>
<name>SYDND_SYNJA</name>
<comment type="function">
    <text evidence="1">Aspartyl-tRNA synthetase with relaxed tRNA specificity since it is able to aspartylate not only its cognate tRNA(Asp) but also tRNA(Asn). Reaction proceeds in two steps: L-aspartate is first activated by ATP to form Asp-AMP and then transferred to the acceptor end of tRNA(Asp/Asn).</text>
</comment>
<comment type="catalytic activity">
    <reaction evidence="1">
        <text>tRNA(Asx) + L-aspartate + ATP = L-aspartyl-tRNA(Asx) + AMP + diphosphate</text>
        <dbReference type="Rhea" id="RHEA:18349"/>
        <dbReference type="Rhea" id="RHEA-COMP:9710"/>
        <dbReference type="Rhea" id="RHEA-COMP:9711"/>
        <dbReference type="ChEBI" id="CHEBI:29991"/>
        <dbReference type="ChEBI" id="CHEBI:30616"/>
        <dbReference type="ChEBI" id="CHEBI:33019"/>
        <dbReference type="ChEBI" id="CHEBI:78442"/>
        <dbReference type="ChEBI" id="CHEBI:78516"/>
        <dbReference type="ChEBI" id="CHEBI:456215"/>
        <dbReference type="EC" id="6.1.1.23"/>
    </reaction>
</comment>
<comment type="subunit">
    <text evidence="1">Homodimer.</text>
</comment>
<comment type="subcellular location">
    <subcellularLocation>
        <location evidence="1">Cytoplasm</location>
    </subcellularLocation>
</comment>
<comment type="similarity">
    <text evidence="1">Belongs to the class-II aminoacyl-tRNA synthetase family. Type 1 subfamily.</text>
</comment>
<dbReference type="EC" id="6.1.1.23" evidence="1"/>
<dbReference type="EMBL" id="CP000239">
    <property type="protein sequence ID" value="ABC99837.1"/>
    <property type="molecule type" value="Genomic_DNA"/>
</dbReference>
<dbReference type="RefSeq" id="WP_011430513.1">
    <property type="nucleotide sequence ID" value="NC_007775.1"/>
</dbReference>
<dbReference type="SMR" id="Q2JTZ2"/>
<dbReference type="STRING" id="321327.CYA_1681"/>
<dbReference type="KEGG" id="cya:CYA_1681"/>
<dbReference type="eggNOG" id="COG0173">
    <property type="taxonomic scope" value="Bacteria"/>
</dbReference>
<dbReference type="HOGENOM" id="CLU_014330_3_2_3"/>
<dbReference type="OrthoDB" id="9802326at2"/>
<dbReference type="Proteomes" id="UP000008818">
    <property type="component" value="Chromosome"/>
</dbReference>
<dbReference type="GO" id="GO:0005737">
    <property type="term" value="C:cytoplasm"/>
    <property type="evidence" value="ECO:0007669"/>
    <property type="project" value="UniProtKB-SubCell"/>
</dbReference>
<dbReference type="GO" id="GO:0004815">
    <property type="term" value="F:aspartate-tRNA ligase activity"/>
    <property type="evidence" value="ECO:0007669"/>
    <property type="project" value="UniProtKB-UniRule"/>
</dbReference>
<dbReference type="GO" id="GO:0050560">
    <property type="term" value="F:aspartate-tRNA(Asn) ligase activity"/>
    <property type="evidence" value="ECO:0007669"/>
    <property type="project" value="UniProtKB-EC"/>
</dbReference>
<dbReference type="GO" id="GO:0005524">
    <property type="term" value="F:ATP binding"/>
    <property type="evidence" value="ECO:0007669"/>
    <property type="project" value="UniProtKB-UniRule"/>
</dbReference>
<dbReference type="GO" id="GO:0003676">
    <property type="term" value="F:nucleic acid binding"/>
    <property type="evidence" value="ECO:0007669"/>
    <property type="project" value="InterPro"/>
</dbReference>
<dbReference type="GO" id="GO:0006422">
    <property type="term" value="P:aspartyl-tRNA aminoacylation"/>
    <property type="evidence" value="ECO:0007669"/>
    <property type="project" value="UniProtKB-UniRule"/>
</dbReference>
<dbReference type="CDD" id="cd00777">
    <property type="entry name" value="AspRS_core"/>
    <property type="match status" value="1"/>
</dbReference>
<dbReference type="CDD" id="cd04317">
    <property type="entry name" value="EcAspRS_like_N"/>
    <property type="match status" value="1"/>
</dbReference>
<dbReference type="Gene3D" id="3.30.930.10">
    <property type="entry name" value="Bira Bifunctional Protein, Domain 2"/>
    <property type="match status" value="1"/>
</dbReference>
<dbReference type="Gene3D" id="3.30.1360.30">
    <property type="entry name" value="GAD-like domain"/>
    <property type="match status" value="1"/>
</dbReference>
<dbReference type="Gene3D" id="2.40.50.140">
    <property type="entry name" value="Nucleic acid-binding proteins"/>
    <property type="match status" value="1"/>
</dbReference>
<dbReference type="HAMAP" id="MF_00044">
    <property type="entry name" value="Asp_tRNA_synth_type1"/>
    <property type="match status" value="1"/>
</dbReference>
<dbReference type="InterPro" id="IPR004364">
    <property type="entry name" value="Aa-tRNA-synt_II"/>
</dbReference>
<dbReference type="InterPro" id="IPR006195">
    <property type="entry name" value="aa-tRNA-synth_II"/>
</dbReference>
<dbReference type="InterPro" id="IPR045864">
    <property type="entry name" value="aa-tRNA-synth_II/BPL/LPL"/>
</dbReference>
<dbReference type="InterPro" id="IPR004524">
    <property type="entry name" value="Asp-tRNA-ligase_1"/>
</dbReference>
<dbReference type="InterPro" id="IPR047089">
    <property type="entry name" value="Asp-tRNA-ligase_1_N"/>
</dbReference>
<dbReference type="InterPro" id="IPR002312">
    <property type="entry name" value="Asp/Asn-tRNA-synth_IIb"/>
</dbReference>
<dbReference type="InterPro" id="IPR047090">
    <property type="entry name" value="AspRS_core"/>
</dbReference>
<dbReference type="InterPro" id="IPR004115">
    <property type="entry name" value="GAD-like_sf"/>
</dbReference>
<dbReference type="InterPro" id="IPR029351">
    <property type="entry name" value="GAD_dom"/>
</dbReference>
<dbReference type="InterPro" id="IPR012340">
    <property type="entry name" value="NA-bd_OB-fold"/>
</dbReference>
<dbReference type="InterPro" id="IPR004365">
    <property type="entry name" value="NA-bd_OB_tRNA"/>
</dbReference>
<dbReference type="NCBIfam" id="TIGR00459">
    <property type="entry name" value="aspS_bact"/>
    <property type="match status" value="1"/>
</dbReference>
<dbReference type="NCBIfam" id="NF001750">
    <property type="entry name" value="PRK00476.1"/>
    <property type="match status" value="1"/>
</dbReference>
<dbReference type="PANTHER" id="PTHR22594:SF5">
    <property type="entry name" value="ASPARTATE--TRNA LIGASE, MITOCHONDRIAL"/>
    <property type="match status" value="1"/>
</dbReference>
<dbReference type="PANTHER" id="PTHR22594">
    <property type="entry name" value="ASPARTYL/LYSYL-TRNA SYNTHETASE"/>
    <property type="match status" value="1"/>
</dbReference>
<dbReference type="Pfam" id="PF02938">
    <property type="entry name" value="GAD"/>
    <property type="match status" value="1"/>
</dbReference>
<dbReference type="Pfam" id="PF00152">
    <property type="entry name" value="tRNA-synt_2"/>
    <property type="match status" value="1"/>
</dbReference>
<dbReference type="Pfam" id="PF01336">
    <property type="entry name" value="tRNA_anti-codon"/>
    <property type="match status" value="1"/>
</dbReference>
<dbReference type="PRINTS" id="PR01042">
    <property type="entry name" value="TRNASYNTHASP"/>
</dbReference>
<dbReference type="SUPFAM" id="SSF55681">
    <property type="entry name" value="Class II aaRS and biotin synthetases"/>
    <property type="match status" value="1"/>
</dbReference>
<dbReference type="SUPFAM" id="SSF55261">
    <property type="entry name" value="GAD domain-like"/>
    <property type="match status" value="1"/>
</dbReference>
<dbReference type="SUPFAM" id="SSF50249">
    <property type="entry name" value="Nucleic acid-binding proteins"/>
    <property type="match status" value="1"/>
</dbReference>
<dbReference type="PROSITE" id="PS50862">
    <property type="entry name" value="AA_TRNA_LIGASE_II"/>
    <property type="match status" value="1"/>
</dbReference>
<sequence>MPAAIRRPPRSLYCGQVRPAHIGQTVTLYGWIDRRRDHGGVIFLDLRDRSGIVQLVADPQKTPLSYELAGQVRSEYVVRVTGTVHQRPSDSFNPRLATGEVEVYAEELEILSRVGKQLPFSVSGEEGEEVREEIRLRYRYLDLRRERLSRNLQLRHQVIKAIRRFLEDEEGFIEVETPILTRSTPEGARDYLVPSRVNPGEWFALPQSPQLFKQLLMVAGVDRYYQIARCFRDEDLRADRQPEFTQLDMEMSFMDQEAILELNERLLCHIFKTVKGIDLPRPFPRLTYAEAMARYGSDKPDTRFGLELVDVSPLFQGSGFKVFAKALQEGGVIKVLPVPGGDEKISNTRIKPGGDLFKLVTQYGAGGLAFIRVRPGSLDTIGALKESLSPEQEQQLLQLTNAKPGDLLLFGAGPAAVVNESLGRLRLHLGQELGLIPENALNLLWITDFPLFEFNAEENRLEALHHPFTAPHPDDLADLKTARAQAYDLVWNGVEVGGGSLRIYQREIQEQVFQTIGLTPEQARDKFGFLLEAFEYGTPPHGGIAYGLDRLVMLLAGEDSIRDVIAFPKTQQARCLLTGAPSGVEAKQLKELHVASTYQPG</sequence>
<keyword id="KW-0030">Aminoacyl-tRNA synthetase</keyword>
<keyword id="KW-0067">ATP-binding</keyword>
<keyword id="KW-0963">Cytoplasm</keyword>
<keyword id="KW-0436">Ligase</keyword>
<keyword id="KW-0547">Nucleotide-binding</keyword>
<keyword id="KW-0648">Protein biosynthesis</keyword>
<gene>
    <name evidence="1" type="primary">aspS</name>
    <name type="ordered locus">CYA_1681</name>
</gene>
<protein>
    <recommendedName>
        <fullName evidence="1">Aspartate--tRNA(Asp/Asn) ligase</fullName>
        <ecNumber evidence="1">6.1.1.23</ecNumber>
    </recommendedName>
    <alternativeName>
        <fullName evidence="1">Aspartyl-tRNA synthetase</fullName>
        <shortName evidence="1">AspRS</shortName>
    </alternativeName>
    <alternativeName>
        <fullName evidence="1">Non-discriminating aspartyl-tRNA synthetase</fullName>
        <shortName evidence="1">ND-AspRS</shortName>
    </alternativeName>
</protein>
<reference key="1">
    <citation type="journal article" date="2007" name="ISME J.">
        <title>Population level functional diversity in a microbial community revealed by comparative genomic and metagenomic analyses.</title>
        <authorList>
            <person name="Bhaya D."/>
            <person name="Grossman A.R."/>
            <person name="Steunou A.-S."/>
            <person name="Khuri N."/>
            <person name="Cohan F.M."/>
            <person name="Hamamura N."/>
            <person name="Melendrez M.C."/>
            <person name="Bateson M.M."/>
            <person name="Ward D.M."/>
            <person name="Heidelberg J.F."/>
        </authorList>
    </citation>
    <scope>NUCLEOTIDE SEQUENCE [LARGE SCALE GENOMIC DNA]</scope>
    <source>
        <strain>JA-3-3Ab</strain>
    </source>
</reference>
<organism>
    <name type="scientific">Synechococcus sp. (strain JA-3-3Ab)</name>
    <name type="common">Cyanobacteria bacterium Yellowstone A-Prime</name>
    <dbReference type="NCBI Taxonomy" id="321327"/>
    <lineage>
        <taxon>Bacteria</taxon>
        <taxon>Bacillati</taxon>
        <taxon>Cyanobacteriota</taxon>
        <taxon>Cyanophyceae</taxon>
        <taxon>Synechococcales</taxon>
        <taxon>Synechococcaceae</taxon>
        <taxon>Synechococcus</taxon>
    </lineage>
</organism>
<evidence type="ECO:0000255" key="1">
    <source>
        <dbReference type="HAMAP-Rule" id="MF_00044"/>
    </source>
</evidence>
<feature type="chain" id="PRO_0000235569" description="Aspartate--tRNA(Asp/Asn) ligase">
    <location>
        <begin position="1"/>
        <end position="601"/>
    </location>
</feature>
<feature type="region of interest" description="Aspartate" evidence="1">
    <location>
        <begin position="210"/>
        <end position="213"/>
    </location>
</feature>
<feature type="binding site" evidence="1">
    <location>
        <position position="186"/>
    </location>
    <ligand>
        <name>L-aspartate</name>
        <dbReference type="ChEBI" id="CHEBI:29991"/>
    </ligand>
</feature>
<feature type="binding site" evidence="1">
    <location>
        <begin position="232"/>
        <end position="234"/>
    </location>
    <ligand>
        <name>ATP</name>
        <dbReference type="ChEBI" id="CHEBI:30616"/>
    </ligand>
</feature>
<feature type="binding site" evidence="1">
    <location>
        <position position="232"/>
    </location>
    <ligand>
        <name>L-aspartate</name>
        <dbReference type="ChEBI" id="CHEBI:29991"/>
    </ligand>
</feature>
<feature type="binding site" evidence="1">
    <location>
        <position position="241"/>
    </location>
    <ligand>
        <name>ATP</name>
        <dbReference type="ChEBI" id="CHEBI:30616"/>
    </ligand>
</feature>
<feature type="binding site" evidence="1">
    <location>
        <position position="465"/>
    </location>
    <ligand>
        <name>L-aspartate</name>
        <dbReference type="ChEBI" id="CHEBI:29991"/>
    </ligand>
</feature>
<feature type="binding site" evidence="1">
    <location>
        <position position="495"/>
    </location>
    <ligand>
        <name>ATP</name>
        <dbReference type="ChEBI" id="CHEBI:30616"/>
    </ligand>
</feature>
<feature type="binding site" evidence="1">
    <location>
        <position position="502"/>
    </location>
    <ligand>
        <name>L-aspartate</name>
        <dbReference type="ChEBI" id="CHEBI:29991"/>
    </ligand>
</feature>
<feature type="binding site" evidence="1">
    <location>
        <begin position="547"/>
        <end position="550"/>
    </location>
    <ligand>
        <name>ATP</name>
        <dbReference type="ChEBI" id="CHEBI:30616"/>
    </ligand>
</feature>
<feature type="site" description="Important for tRNA non-discrimination" evidence="1">
    <location>
        <position position="38"/>
    </location>
</feature>